<gene>
    <name type="ordered locus">YHR022C-A</name>
</gene>
<reference key="1">
    <citation type="journal article" date="1994" name="Science">
        <title>Complete nucleotide sequence of Saccharomyces cerevisiae chromosome VIII.</title>
        <authorList>
            <person name="Johnston M."/>
            <person name="Andrews S."/>
            <person name="Brinkman R."/>
            <person name="Cooper J."/>
            <person name="Ding H."/>
            <person name="Dover J."/>
            <person name="Du Z."/>
            <person name="Favello A."/>
            <person name="Fulton L."/>
            <person name="Gattung S."/>
            <person name="Geisel C."/>
            <person name="Kirsten J."/>
            <person name="Kucaba T."/>
            <person name="Hillier L.W."/>
            <person name="Jier M."/>
            <person name="Johnston L."/>
            <person name="Langston Y."/>
            <person name="Latreille P."/>
            <person name="Louis E.J."/>
            <person name="Macri C."/>
            <person name="Mardis E."/>
            <person name="Menezes S."/>
            <person name="Mouser L."/>
            <person name="Nhan M."/>
            <person name="Rifkin L."/>
            <person name="Riles L."/>
            <person name="St Peter H."/>
            <person name="Trevaskis E."/>
            <person name="Vaughan K."/>
            <person name="Vignati D."/>
            <person name="Wilcox L."/>
            <person name="Wohldman P."/>
            <person name="Waterston R."/>
            <person name="Wilson R."/>
            <person name="Vaudin M."/>
        </authorList>
    </citation>
    <scope>NUCLEOTIDE SEQUENCE [LARGE SCALE GENOMIC DNA]</scope>
    <source>
        <strain>ATCC 204508 / S288c</strain>
    </source>
</reference>
<reference key="2">
    <citation type="journal article" date="2014" name="G3 (Bethesda)">
        <title>The reference genome sequence of Saccharomyces cerevisiae: Then and now.</title>
        <authorList>
            <person name="Engel S.R."/>
            <person name="Dietrich F.S."/>
            <person name="Fisk D.G."/>
            <person name="Binkley G."/>
            <person name="Balakrishnan R."/>
            <person name="Costanzo M.C."/>
            <person name="Dwight S.S."/>
            <person name="Hitz B.C."/>
            <person name="Karra K."/>
            <person name="Nash R.S."/>
            <person name="Weng S."/>
            <person name="Wong E.D."/>
            <person name="Lloyd P."/>
            <person name="Skrzypek M.S."/>
            <person name="Miyasato S.R."/>
            <person name="Simison M."/>
            <person name="Cherry J.M."/>
        </authorList>
    </citation>
    <scope>GENOME REANNOTATION</scope>
    <source>
        <strain>ATCC 204508 / S288c</strain>
    </source>
</reference>
<reference key="3">
    <citation type="journal article" date="2002" name="Nat. Biotechnol.">
        <title>An integrated approach for finding overlooked genes in yeast.</title>
        <authorList>
            <person name="Kumar A."/>
            <person name="Harrison P.M."/>
            <person name="Cheung K.-H."/>
            <person name="Lan N."/>
            <person name="Echols N."/>
            <person name="Bertone P."/>
            <person name="Miller P."/>
            <person name="Gerstein M.B."/>
            <person name="Snyder M."/>
        </authorList>
    </citation>
    <scope>NUCLEOTIDE SEQUENCE [GENOMIC DNA]</scope>
</reference>
<protein>
    <recommendedName>
        <fullName>Uncharacterized protein YHR022C-A</fullName>
    </recommendedName>
</protein>
<name>YH022_YEAST</name>
<keyword id="KW-1185">Reference proteome</keyword>
<dbReference type="EMBL" id="U10399">
    <property type="status" value="NOT_ANNOTATED_CDS"/>
    <property type="molecule type" value="Genomic_DNA"/>
</dbReference>
<dbReference type="EMBL" id="AF479899">
    <property type="protein sequence ID" value="AAL79212.1"/>
    <property type="molecule type" value="Genomic_DNA"/>
</dbReference>
<dbReference type="EMBL" id="BK006934">
    <property type="protein sequence ID" value="DAA06713.1"/>
    <property type="molecule type" value="Genomic_DNA"/>
</dbReference>
<dbReference type="RefSeq" id="NP_878087.1">
    <property type="nucleotide sequence ID" value="NM_001184597.1"/>
</dbReference>
<dbReference type="BioGRID" id="37069">
    <property type="interactions" value="72"/>
</dbReference>
<dbReference type="FunCoup" id="Q8TGT6">
    <property type="interactions" value="12"/>
</dbReference>
<dbReference type="STRING" id="4932.YHR022C-A"/>
<dbReference type="PaxDb" id="4932-YHR022C-A"/>
<dbReference type="EnsemblFungi" id="YHR022C-A_mRNA">
    <property type="protein sequence ID" value="YHR022C-A"/>
    <property type="gene ID" value="YHR022C-A"/>
</dbReference>
<dbReference type="GeneID" id="1466527"/>
<dbReference type="KEGG" id="sce:YHR022C-A"/>
<dbReference type="AGR" id="SGD:S000028645"/>
<dbReference type="SGD" id="S000028645">
    <property type="gene designation" value="YHR022C-A"/>
</dbReference>
<dbReference type="VEuPathDB" id="FungiDB:YHR022C-A"/>
<dbReference type="HOGENOM" id="CLU_3410761_0_0_1"/>
<dbReference type="InParanoid" id="Q8TGT6"/>
<dbReference type="BioCyc" id="YEAST:G3O-31269-MONOMER"/>
<dbReference type="BioGRID-ORCS" id="1466527">
    <property type="hits" value="0 hits in 10 CRISPR screens"/>
</dbReference>
<dbReference type="PRO" id="PR:Q8TGT6"/>
<dbReference type="Proteomes" id="UP000002311">
    <property type="component" value="Chromosome VIII"/>
</dbReference>
<proteinExistence type="predicted"/>
<accession>Q8TGT6</accession>
<accession>D3DKW9</accession>
<feature type="chain" id="PRO_0000245394" description="Uncharacterized protein YHR022C-A">
    <location>
        <begin position="1"/>
        <end position="29"/>
    </location>
</feature>
<organism>
    <name type="scientific">Saccharomyces cerevisiae (strain ATCC 204508 / S288c)</name>
    <name type="common">Baker's yeast</name>
    <dbReference type="NCBI Taxonomy" id="559292"/>
    <lineage>
        <taxon>Eukaryota</taxon>
        <taxon>Fungi</taxon>
        <taxon>Dikarya</taxon>
        <taxon>Ascomycota</taxon>
        <taxon>Saccharomycotina</taxon>
        <taxon>Saccharomycetes</taxon>
        <taxon>Saccharomycetales</taxon>
        <taxon>Saccharomycetaceae</taxon>
        <taxon>Saccharomyces</taxon>
    </lineage>
</organism>
<sequence length="29" mass="3505">MKIKFSRGARFSATFSFDKYPFLLYEVVR</sequence>